<accession>O74443</accession>
<proteinExistence type="evidence at protein level"/>
<sequence length="272" mass="31109">MQILKDQENLNPDGGSFVLITPPLSPPKQKSLSYTNISRRHGMRACMKGIVYEVYKNQPKLWLQQELIWLRRKRIHPIPKARRNNHVGRWANRHSNVSSSSGSRGRSSVSSRDSSPSYSGALRSAERSISSSPSTIEARRRKSARGNGLNGAIDVANLPFEELPNFCPDMSVLDNRTHPRTLKAEWKGPPLDLSDDPYRDLLHPAELHLASTLRLPCLIYLDNKKRIFAEWHHRRQQGLTFRKTDAQRASRVDVNKASRLWKAFHEVGFFDD</sequence>
<protein>
    <recommendedName>
        <fullName>SWIRM domain-containing protein laf2</fullName>
    </recommendedName>
    <alternativeName>
        <fullName>Clr6 L-associated factor 2</fullName>
    </alternativeName>
</protein>
<gene>
    <name type="primary">laf2</name>
    <name type="ORF">SPCC1682.13</name>
</gene>
<dbReference type="EMBL" id="CU329672">
    <property type="protein sequence ID" value="CAA20679.1"/>
    <property type="molecule type" value="Genomic_DNA"/>
</dbReference>
<dbReference type="PIR" id="T41070">
    <property type="entry name" value="T41070"/>
</dbReference>
<dbReference type="RefSeq" id="NP_587806.1">
    <property type="nucleotide sequence ID" value="NM_001022799.2"/>
</dbReference>
<dbReference type="SMR" id="O74443"/>
<dbReference type="BioGRID" id="275530">
    <property type="interactions" value="3"/>
</dbReference>
<dbReference type="FunCoup" id="O74443">
    <property type="interactions" value="34"/>
</dbReference>
<dbReference type="STRING" id="284812.O74443"/>
<dbReference type="iPTMnet" id="O74443"/>
<dbReference type="PaxDb" id="4896-SPCC1682.13.1"/>
<dbReference type="EnsemblFungi" id="SPCC1682.13.1">
    <property type="protein sequence ID" value="SPCC1682.13.1:pep"/>
    <property type="gene ID" value="SPCC1682.13"/>
</dbReference>
<dbReference type="GeneID" id="2538956"/>
<dbReference type="KEGG" id="spo:2538956"/>
<dbReference type="PomBase" id="SPCC1682.13">
    <property type="gene designation" value="laf2"/>
</dbReference>
<dbReference type="VEuPathDB" id="FungiDB:SPCC1682.13"/>
<dbReference type="eggNOG" id="ENOG502R6VN">
    <property type="taxonomic scope" value="Eukaryota"/>
</dbReference>
<dbReference type="HOGENOM" id="CLU_900649_0_0_1"/>
<dbReference type="InParanoid" id="O74443"/>
<dbReference type="OMA" id="QPKLWLQ"/>
<dbReference type="Reactome" id="R-SPO-5689880">
    <property type="pathway name" value="Ub-specific processing proteases"/>
</dbReference>
<dbReference type="PRO" id="PR:O74443"/>
<dbReference type="Proteomes" id="UP000002485">
    <property type="component" value="Chromosome III"/>
</dbReference>
<dbReference type="GO" id="GO:0005634">
    <property type="term" value="C:nucleus"/>
    <property type="evidence" value="ECO:0007005"/>
    <property type="project" value="PomBase"/>
</dbReference>
<dbReference type="GO" id="GO:0033698">
    <property type="term" value="C:Rpd3L complex"/>
    <property type="evidence" value="ECO:0000314"/>
    <property type="project" value="PomBase"/>
</dbReference>
<dbReference type="GO" id="GO:0070210">
    <property type="term" value="C:Rpd3L-Expanded complex"/>
    <property type="evidence" value="ECO:0000314"/>
    <property type="project" value="PomBase"/>
</dbReference>
<dbReference type="GO" id="GO:0003682">
    <property type="term" value="F:chromatin binding"/>
    <property type="evidence" value="ECO:0000318"/>
    <property type="project" value="GO_Central"/>
</dbReference>
<dbReference type="GO" id="GO:0003677">
    <property type="term" value="F:DNA binding"/>
    <property type="evidence" value="ECO:0000255"/>
    <property type="project" value="PomBase"/>
</dbReference>
<dbReference type="GO" id="GO:0003713">
    <property type="term" value="F:transcription coactivator activity"/>
    <property type="evidence" value="ECO:0000318"/>
    <property type="project" value="GO_Central"/>
</dbReference>
<dbReference type="GO" id="GO:0006338">
    <property type="term" value="P:chromatin remodeling"/>
    <property type="evidence" value="ECO:0000318"/>
    <property type="project" value="GO_Central"/>
</dbReference>
<dbReference type="GO" id="GO:0006357">
    <property type="term" value="P:regulation of transcription by RNA polymerase II"/>
    <property type="evidence" value="ECO:0000318"/>
    <property type="project" value="GO_Central"/>
</dbReference>
<dbReference type="GO" id="GO:0045815">
    <property type="term" value="P:transcription initiation-coupled chromatin remodeling"/>
    <property type="evidence" value="ECO:0000305"/>
    <property type="project" value="PomBase"/>
</dbReference>
<dbReference type="FunFam" id="1.10.10.10:FF:000087">
    <property type="entry name" value="Transcriptional adapter 2"/>
    <property type="match status" value="1"/>
</dbReference>
<dbReference type="Gene3D" id="1.10.10.10">
    <property type="entry name" value="Winged helix-like DNA-binding domain superfamily/Winged helix DNA-binding domain"/>
    <property type="match status" value="1"/>
</dbReference>
<dbReference type="InterPro" id="IPR009057">
    <property type="entry name" value="Homeodomain-like_sf"/>
</dbReference>
<dbReference type="InterPro" id="IPR007526">
    <property type="entry name" value="SWIRM"/>
</dbReference>
<dbReference type="InterPro" id="IPR036388">
    <property type="entry name" value="WH-like_DNA-bd_sf"/>
</dbReference>
<dbReference type="PANTHER" id="PTHR12374:SF21">
    <property type="entry name" value="SWIRM DOMAIN-CONTAINING PROTEIN FUN19-RELATED"/>
    <property type="match status" value="1"/>
</dbReference>
<dbReference type="PANTHER" id="PTHR12374">
    <property type="entry name" value="TRANSCRIPTIONAL ADAPTOR 2 ADA2 -RELATED"/>
    <property type="match status" value="1"/>
</dbReference>
<dbReference type="Pfam" id="PF04433">
    <property type="entry name" value="SWIRM"/>
    <property type="match status" value="1"/>
</dbReference>
<dbReference type="SUPFAM" id="SSF46689">
    <property type="entry name" value="Homeodomain-like"/>
    <property type="match status" value="1"/>
</dbReference>
<dbReference type="PROSITE" id="PS50934">
    <property type="entry name" value="SWIRM"/>
    <property type="match status" value="1"/>
</dbReference>
<comment type="function">
    <text>Component of the RPD3C(L) histone deacetylase complex (HDAC) responsible for the deacetylation of lysine residues on the N-terminal part of the core histones (H2A, H2B, H3 and H4). Histone deacetylation gives a tag for epigenetic repression and plays an important role in transcriptional regulation, cell cycle progression and developmental events.</text>
</comment>
<comment type="subunit">
    <text>Component of the RPD3C(L) complex.</text>
</comment>
<comment type="subcellular location">
    <subcellularLocation>
        <location evidence="3">Nucleus</location>
    </subcellularLocation>
</comment>
<keyword id="KW-0156">Chromatin regulator</keyword>
<keyword id="KW-0539">Nucleus</keyword>
<keyword id="KW-0597">Phosphoprotein</keyword>
<keyword id="KW-1185">Reference proteome</keyword>
<keyword id="KW-0678">Repressor</keyword>
<keyword id="KW-0804">Transcription</keyword>
<keyword id="KW-0805">Transcription regulation</keyword>
<evidence type="ECO:0000255" key="1">
    <source>
        <dbReference type="PROSITE-ProRule" id="PRU00247"/>
    </source>
</evidence>
<evidence type="ECO:0000256" key="2">
    <source>
        <dbReference type="SAM" id="MobiDB-lite"/>
    </source>
</evidence>
<evidence type="ECO:0000269" key="3">
    <source>
    </source>
</evidence>
<evidence type="ECO:0000269" key="4">
    <source>
    </source>
</evidence>
<name>LAF2_SCHPO</name>
<feature type="chain" id="PRO_0000303945" description="SWIRM domain-containing protein laf2">
    <location>
        <begin position="1"/>
        <end position="272"/>
    </location>
</feature>
<feature type="domain" description="SWIRM" evidence="1">
    <location>
        <begin position="182"/>
        <end position="272"/>
    </location>
</feature>
<feature type="region of interest" description="Disordered" evidence="2">
    <location>
        <begin position="86"/>
        <end position="148"/>
    </location>
</feature>
<feature type="compositionally biased region" description="Low complexity" evidence="2">
    <location>
        <begin position="95"/>
        <end position="120"/>
    </location>
</feature>
<feature type="compositionally biased region" description="Low complexity" evidence="2">
    <location>
        <begin position="127"/>
        <end position="136"/>
    </location>
</feature>
<feature type="modified residue" description="Phosphoserine" evidence="4">
    <location>
        <position position="130"/>
    </location>
</feature>
<feature type="modified residue" description="Phosphoserine" evidence="4">
    <location>
        <position position="132"/>
    </location>
</feature>
<feature type="modified residue" description="Phosphothreonine" evidence="4">
    <location>
        <position position="135"/>
    </location>
</feature>
<reference key="1">
    <citation type="journal article" date="2002" name="Nature">
        <title>The genome sequence of Schizosaccharomyces pombe.</title>
        <authorList>
            <person name="Wood V."/>
            <person name="Gwilliam R."/>
            <person name="Rajandream M.A."/>
            <person name="Lyne M.H."/>
            <person name="Lyne R."/>
            <person name="Stewart A."/>
            <person name="Sgouros J.G."/>
            <person name="Peat N."/>
            <person name="Hayles J."/>
            <person name="Baker S.G."/>
            <person name="Basham D."/>
            <person name="Bowman S."/>
            <person name="Brooks K."/>
            <person name="Brown D."/>
            <person name="Brown S."/>
            <person name="Chillingworth T."/>
            <person name="Churcher C.M."/>
            <person name="Collins M."/>
            <person name="Connor R."/>
            <person name="Cronin A."/>
            <person name="Davis P."/>
            <person name="Feltwell T."/>
            <person name="Fraser A."/>
            <person name="Gentles S."/>
            <person name="Goble A."/>
            <person name="Hamlin N."/>
            <person name="Harris D.E."/>
            <person name="Hidalgo J."/>
            <person name="Hodgson G."/>
            <person name="Holroyd S."/>
            <person name="Hornsby T."/>
            <person name="Howarth S."/>
            <person name="Huckle E.J."/>
            <person name="Hunt S."/>
            <person name="Jagels K."/>
            <person name="James K.D."/>
            <person name="Jones L."/>
            <person name="Jones M."/>
            <person name="Leather S."/>
            <person name="McDonald S."/>
            <person name="McLean J."/>
            <person name="Mooney P."/>
            <person name="Moule S."/>
            <person name="Mungall K.L."/>
            <person name="Murphy L.D."/>
            <person name="Niblett D."/>
            <person name="Odell C."/>
            <person name="Oliver K."/>
            <person name="O'Neil S."/>
            <person name="Pearson D."/>
            <person name="Quail M.A."/>
            <person name="Rabbinowitsch E."/>
            <person name="Rutherford K.M."/>
            <person name="Rutter S."/>
            <person name="Saunders D."/>
            <person name="Seeger K."/>
            <person name="Sharp S."/>
            <person name="Skelton J."/>
            <person name="Simmonds M.N."/>
            <person name="Squares R."/>
            <person name="Squares S."/>
            <person name="Stevens K."/>
            <person name="Taylor K."/>
            <person name="Taylor R.G."/>
            <person name="Tivey A."/>
            <person name="Walsh S.V."/>
            <person name="Warren T."/>
            <person name="Whitehead S."/>
            <person name="Woodward J.R."/>
            <person name="Volckaert G."/>
            <person name="Aert R."/>
            <person name="Robben J."/>
            <person name="Grymonprez B."/>
            <person name="Weltjens I."/>
            <person name="Vanstreels E."/>
            <person name="Rieger M."/>
            <person name="Schaefer M."/>
            <person name="Mueller-Auer S."/>
            <person name="Gabel C."/>
            <person name="Fuchs M."/>
            <person name="Duesterhoeft A."/>
            <person name="Fritzc C."/>
            <person name="Holzer E."/>
            <person name="Moestl D."/>
            <person name="Hilbert H."/>
            <person name="Borzym K."/>
            <person name="Langer I."/>
            <person name="Beck A."/>
            <person name="Lehrach H."/>
            <person name="Reinhardt R."/>
            <person name="Pohl T.M."/>
            <person name="Eger P."/>
            <person name="Zimmermann W."/>
            <person name="Wedler H."/>
            <person name="Wambutt R."/>
            <person name="Purnelle B."/>
            <person name="Goffeau A."/>
            <person name="Cadieu E."/>
            <person name="Dreano S."/>
            <person name="Gloux S."/>
            <person name="Lelaure V."/>
            <person name="Mottier S."/>
            <person name="Galibert F."/>
            <person name="Aves S.J."/>
            <person name="Xiang Z."/>
            <person name="Hunt C."/>
            <person name="Moore K."/>
            <person name="Hurst S.M."/>
            <person name="Lucas M."/>
            <person name="Rochet M."/>
            <person name="Gaillardin C."/>
            <person name="Tallada V.A."/>
            <person name="Garzon A."/>
            <person name="Thode G."/>
            <person name="Daga R.R."/>
            <person name="Cruzado L."/>
            <person name="Jimenez J."/>
            <person name="Sanchez M."/>
            <person name="del Rey F."/>
            <person name="Benito J."/>
            <person name="Dominguez A."/>
            <person name="Revuelta J.L."/>
            <person name="Moreno S."/>
            <person name="Armstrong J."/>
            <person name="Forsburg S.L."/>
            <person name="Cerutti L."/>
            <person name="Lowe T."/>
            <person name="McCombie W.R."/>
            <person name="Paulsen I."/>
            <person name="Potashkin J."/>
            <person name="Shpakovski G.V."/>
            <person name="Ussery D."/>
            <person name="Barrell B.G."/>
            <person name="Nurse P."/>
        </authorList>
    </citation>
    <scope>NUCLEOTIDE SEQUENCE [LARGE SCALE GENOMIC DNA]</scope>
    <source>
        <strain>972 / ATCC 24843</strain>
    </source>
</reference>
<reference key="2">
    <citation type="journal article" date="2006" name="Nat. Biotechnol.">
        <title>ORFeome cloning and global analysis of protein localization in the fission yeast Schizosaccharomyces pombe.</title>
        <authorList>
            <person name="Matsuyama A."/>
            <person name="Arai R."/>
            <person name="Yashiroda Y."/>
            <person name="Shirai A."/>
            <person name="Kamata A."/>
            <person name="Sekido S."/>
            <person name="Kobayashi Y."/>
            <person name="Hashimoto A."/>
            <person name="Hamamoto M."/>
            <person name="Hiraoka Y."/>
            <person name="Horinouchi S."/>
            <person name="Yoshida M."/>
        </authorList>
    </citation>
    <scope>SUBCELLULAR LOCATION [LARGE SCALE ANALYSIS]</scope>
</reference>
<reference key="3">
    <citation type="journal article" date="2008" name="J. Proteome Res.">
        <title>Phosphoproteome analysis of fission yeast.</title>
        <authorList>
            <person name="Wilson-Grady J.T."/>
            <person name="Villen J."/>
            <person name="Gygi S.P."/>
        </authorList>
    </citation>
    <scope>PHOSPHORYLATION [LARGE SCALE ANALYSIS] AT SER-130; SER-132 AND THR-135</scope>
    <scope>IDENTIFICATION BY MASS SPECTROMETRY</scope>
</reference>
<organism>
    <name type="scientific">Schizosaccharomyces pombe (strain 972 / ATCC 24843)</name>
    <name type="common">Fission yeast</name>
    <dbReference type="NCBI Taxonomy" id="284812"/>
    <lineage>
        <taxon>Eukaryota</taxon>
        <taxon>Fungi</taxon>
        <taxon>Dikarya</taxon>
        <taxon>Ascomycota</taxon>
        <taxon>Taphrinomycotina</taxon>
        <taxon>Schizosaccharomycetes</taxon>
        <taxon>Schizosaccharomycetales</taxon>
        <taxon>Schizosaccharomycetaceae</taxon>
        <taxon>Schizosaccharomyces</taxon>
    </lineage>
</organism>